<feature type="chain" id="PRO_1000018586" description="N-(5'-phosphoribosyl)anthranilate isomerase">
    <location>
        <begin position="1"/>
        <end position="222"/>
    </location>
</feature>
<gene>
    <name evidence="1" type="primary">trpF</name>
    <name type="ordered locus">BruAb1_2086</name>
</gene>
<reference key="1">
    <citation type="journal article" date="2005" name="J. Bacteriol.">
        <title>Completion of the genome sequence of Brucella abortus and comparison to the highly similar genomes of Brucella melitensis and Brucella suis.</title>
        <authorList>
            <person name="Halling S.M."/>
            <person name="Peterson-Burch B.D."/>
            <person name="Bricker B.J."/>
            <person name="Zuerner R.L."/>
            <person name="Qing Z."/>
            <person name="Li L.-L."/>
            <person name="Kapur V."/>
            <person name="Alt D.P."/>
            <person name="Olsen S.C."/>
        </authorList>
    </citation>
    <scope>NUCLEOTIDE SEQUENCE [LARGE SCALE GENOMIC DNA]</scope>
    <source>
        <strain>9-941</strain>
    </source>
</reference>
<sequence length="222" mass="23614">MALDIKICGLKTPEAVAAALDGGATHIGFIFFPKSPRHITPDAAARLRAAATGRAVAVAVTVDADDEALDEIVKTVRPDMLQLHGGETPERVRFLKERYNLPVMKAFSIREAGDLEAIAPYRGIADRFLFDAKPPKGSELPGGNGISFDWNLLAALDADIDYMLSGGLNADNIAEALLKTGAPGIDISSGVECAPGEKDVRLIENFFQAVADANAQPFARRA</sequence>
<accession>Q57AE9</accession>
<comment type="catalytic activity">
    <reaction evidence="1">
        <text>N-(5-phospho-beta-D-ribosyl)anthranilate = 1-(2-carboxyphenylamino)-1-deoxy-D-ribulose 5-phosphate</text>
        <dbReference type="Rhea" id="RHEA:21540"/>
        <dbReference type="ChEBI" id="CHEBI:18277"/>
        <dbReference type="ChEBI" id="CHEBI:58613"/>
        <dbReference type="EC" id="5.3.1.24"/>
    </reaction>
</comment>
<comment type="pathway">
    <text evidence="1">Amino-acid biosynthesis; L-tryptophan biosynthesis; L-tryptophan from chorismate: step 3/5.</text>
</comment>
<comment type="similarity">
    <text evidence="1">Belongs to the TrpF family.</text>
</comment>
<keyword id="KW-0028">Amino-acid biosynthesis</keyword>
<keyword id="KW-0057">Aromatic amino acid biosynthesis</keyword>
<keyword id="KW-0413">Isomerase</keyword>
<keyword id="KW-0822">Tryptophan biosynthesis</keyword>
<dbReference type="EC" id="5.3.1.24" evidence="1"/>
<dbReference type="EMBL" id="AE017223">
    <property type="protein sequence ID" value="AAX75385.1"/>
    <property type="molecule type" value="Genomic_DNA"/>
</dbReference>
<dbReference type="RefSeq" id="WP_002965175.1">
    <property type="nucleotide sequence ID" value="NC_006932.1"/>
</dbReference>
<dbReference type="SMR" id="Q57AE9"/>
<dbReference type="EnsemblBacteria" id="AAX75385">
    <property type="protein sequence ID" value="AAX75385"/>
    <property type="gene ID" value="BruAb1_2086"/>
</dbReference>
<dbReference type="KEGG" id="bmb:BruAb1_2086"/>
<dbReference type="HOGENOM" id="CLU_076364_1_1_5"/>
<dbReference type="UniPathway" id="UPA00035">
    <property type="reaction ID" value="UER00042"/>
</dbReference>
<dbReference type="Proteomes" id="UP000000540">
    <property type="component" value="Chromosome I"/>
</dbReference>
<dbReference type="GO" id="GO:0004640">
    <property type="term" value="F:phosphoribosylanthranilate isomerase activity"/>
    <property type="evidence" value="ECO:0007669"/>
    <property type="project" value="UniProtKB-UniRule"/>
</dbReference>
<dbReference type="GO" id="GO:0000162">
    <property type="term" value="P:L-tryptophan biosynthetic process"/>
    <property type="evidence" value="ECO:0007669"/>
    <property type="project" value="UniProtKB-UniRule"/>
</dbReference>
<dbReference type="CDD" id="cd00405">
    <property type="entry name" value="PRAI"/>
    <property type="match status" value="1"/>
</dbReference>
<dbReference type="Gene3D" id="3.20.20.70">
    <property type="entry name" value="Aldolase class I"/>
    <property type="match status" value="1"/>
</dbReference>
<dbReference type="HAMAP" id="MF_00135">
    <property type="entry name" value="PRAI"/>
    <property type="match status" value="1"/>
</dbReference>
<dbReference type="InterPro" id="IPR013785">
    <property type="entry name" value="Aldolase_TIM"/>
</dbReference>
<dbReference type="InterPro" id="IPR001240">
    <property type="entry name" value="PRAI_dom"/>
</dbReference>
<dbReference type="InterPro" id="IPR011060">
    <property type="entry name" value="RibuloseP-bd_barrel"/>
</dbReference>
<dbReference type="InterPro" id="IPR044643">
    <property type="entry name" value="TrpF_fam"/>
</dbReference>
<dbReference type="NCBIfam" id="NF002295">
    <property type="entry name" value="PRK01222.1-1"/>
    <property type="match status" value="1"/>
</dbReference>
<dbReference type="PANTHER" id="PTHR42894">
    <property type="entry name" value="N-(5'-PHOSPHORIBOSYL)ANTHRANILATE ISOMERASE"/>
    <property type="match status" value="1"/>
</dbReference>
<dbReference type="PANTHER" id="PTHR42894:SF1">
    <property type="entry name" value="N-(5'-PHOSPHORIBOSYL)ANTHRANILATE ISOMERASE"/>
    <property type="match status" value="1"/>
</dbReference>
<dbReference type="Pfam" id="PF00697">
    <property type="entry name" value="PRAI"/>
    <property type="match status" value="1"/>
</dbReference>
<dbReference type="SUPFAM" id="SSF51366">
    <property type="entry name" value="Ribulose-phoshate binding barrel"/>
    <property type="match status" value="1"/>
</dbReference>
<name>TRPF_BRUAB</name>
<protein>
    <recommendedName>
        <fullName evidence="1">N-(5'-phosphoribosyl)anthranilate isomerase</fullName>
        <shortName evidence="1">PRAI</shortName>
        <ecNumber evidence="1">5.3.1.24</ecNumber>
    </recommendedName>
</protein>
<evidence type="ECO:0000255" key="1">
    <source>
        <dbReference type="HAMAP-Rule" id="MF_00135"/>
    </source>
</evidence>
<organism>
    <name type="scientific">Brucella abortus biovar 1 (strain 9-941)</name>
    <dbReference type="NCBI Taxonomy" id="262698"/>
    <lineage>
        <taxon>Bacteria</taxon>
        <taxon>Pseudomonadati</taxon>
        <taxon>Pseudomonadota</taxon>
        <taxon>Alphaproteobacteria</taxon>
        <taxon>Hyphomicrobiales</taxon>
        <taxon>Brucellaceae</taxon>
        <taxon>Brucella/Ochrobactrum group</taxon>
        <taxon>Brucella</taxon>
    </lineage>
</organism>
<proteinExistence type="inferred from homology"/>